<comment type="function">
    <text evidence="1">Is involved in L-lactate degradation and allows cells to grow with lactate as the sole carbon source. Has probably a role as an electron transporter during oxidation of L-lactate.</text>
</comment>
<comment type="similarity">
    <text evidence="1">Belongs to the LutB/YkgF family.</text>
</comment>
<reference key="1">
    <citation type="submission" date="2008-10" db="EMBL/GenBank/DDBJ databases">
        <title>Genome sequence of Bacillus cereus B4264.</title>
        <authorList>
            <person name="Dodson R.J."/>
            <person name="Durkin A.S."/>
            <person name="Rosovitz M.J."/>
            <person name="Rasko D.A."/>
            <person name="Hoffmaster A."/>
            <person name="Ravel J."/>
            <person name="Sutton G."/>
        </authorList>
    </citation>
    <scope>NUCLEOTIDE SEQUENCE [LARGE SCALE GENOMIC DNA]</scope>
    <source>
        <strain>B4264</strain>
    </source>
</reference>
<organism>
    <name type="scientific">Bacillus cereus (strain B4264)</name>
    <dbReference type="NCBI Taxonomy" id="405532"/>
    <lineage>
        <taxon>Bacteria</taxon>
        <taxon>Bacillati</taxon>
        <taxon>Bacillota</taxon>
        <taxon>Bacilli</taxon>
        <taxon>Bacillales</taxon>
        <taxon>Bacillaceae</taxon>
        <taxon>Bacillus</taxon>
        <taxon>Bacillus cereus group</taxon>
    </lineage>
</organism>
<accession>B7HH59</accession>
<feature type="chain" id="PRO_0000383967" description="Lactate utilization protein B">
    <location>
        <begin position="1"/>
        <end position="473"/>
    </location>
</feature>
<feature type="domain" description="4Fe-4S ferredoxin-type 1" evidence="1">
    <location>
        <begin position="302"/>
        <end position="332"/>
    </location>
</feature>
<feature type="domain" description="4Fe-4S ferredoxin-type 2" evidence="1">
    <location>
        <begin position="351"/>
        <end position="380"/>
    </location>
</feature>
<feature type="binding site" evidence="1">
    <location>
        <position position="311"/>
    </location>
    <ligand>
        <name>[4Fe-4S] cluster</name>
        <dbReference type="ChEBI" id="CHEBI:49883"/>
        <label>1</label>
    </ligand>
</feature>
<feature type="binding site" evidence="1">
    <location>
        <position position="314"/>
    </location>
    <ligand>
        <name>[4Fe-4S] cluster</name>
        <dbReference type="ChEBI" id="CHEBI:49883"/>
        <label>1</label>
    </ligand>
</feature>
<feature type="binding site" evidence="1">
    <location>
        <position position="317"/>
    </location>
    <ligand>
        <name>[4Fe-4S] cluster</name>
        <dbReference type="ChEBI" id="CHEBI:49883"/>
        <label>1</label>
    </ligand>
</feature>
<feature type="binding site" evidence="1">
    <location>
        <position position="321"/>
    </location>
    <ligand>
        <name>[4Fe-4S] cluster</name>
        <dbReference type="ChEBI" id="CHEBI:49883"/>
        <label>2</label>
    </ligand>
</feature>
<feature type="binding site" evidence="1">
    <location>
        <position position="364"/>
    </location>
    <ligand>
        <name>[4Fe-4S] cluster</name>
        <dbReference type="ChEBI" id="CHEBI:49883"/>
        <label>2</label>
    </ligand>
</feature>
<feature type="binding site" evidence="1">
    <location>
        <position position="367"/>
    </location>
    <ligand>
        <name>[4Fe-4S] cluster</name>
        <dbReference type="ChEBI" id="CHEBI:49883"/>
        <label>2</label>
    </ligand>
</feature>
<feature type="binding site" evidence="1">
    <location>
        <position position="371"/>
    </location>
    <ligand>
        <name>[4Fe-4S] cluster</name>
        <dbReference type="ChEBI" id="CHEBI:49883"/>
        <label>1</label>
    </ligand>
</feature>
<proteinExistence type="inferred from homology"/>
<dbReference type="EMBL" id="CP001176">
    <property type="protein sequence ID" value="ACK60693.1"/>
    <property type="molecule type" value="Genomic_DNA"/>
</dbReference>
<dbReference type="RefSeq" id="WP_000061930.1">
    <property type="nucleotide sequence ID" value="NZ_VEHB01000003.1"/>
</dbReference>
<dbReference type="KEGG" id="bcb:BCB4264_A1355"/>
<dbReference type="HOGENOM" id="CLU_027059_2_0_9"/>
<dbReference type="Proteomes" id="UP000007096">
    <property type="component" value="Chromosome"/>
</dbReference>
<dbReference type="GO" id="GO:0051539">
    <property type="term" value="F:4 iron, 4 sulfur cluster binding"/>
    <property type="evidence" value="ECO:0007669"/>
    <property type="project" value="UniProtKB-KW"/>
</dbReference>
<dbReference type="GO" id="GO:0046872">
    <property type="term" value="F:metal ion binding"/>
    <property type="evidence" value="ECO:0007669"/>
    <property type="project" value="UniProtKB-KW"/>
</dbReference>
<dbReference type="GO" id="GO:0006089">
    <property type="term" value="P:lactate metabolic process"/>
    <property type="evidence" value="ECO:0007669"/>
    <property type="project" value="UniProtKB-UniRule"/>
</dbReference>
<dbReference type="Gene3D" id="1.10.1060.10">
    <property type="entry name" value="Alpha-helical ferredoxin"/>
    <property type="match status" value="1"/>
</dbReference>
<dbReference type="Gene3D" id="3.40.50.10420">
    <property type="entry name" value="NagB/RpiA/CoA transferase-like"/>
    <property type="match status" value="1"/>
</dbReference>
<dbReference type="HAMAP" id="MF_02103">
    <property type="entry name" value="LutB"/>
    <property type="match status" value="1"/>
</dbReference>
<dbReference type="InterPro" id="IPR017896">
    <property type="entry name" value="4Fe4S_Fe-S-bd"/>
</dbReference>
<dbReference type="InterPro" id="IPR017900">
    <property type="entry name" value="4Fe4S_Fe_S_CS"/>
</dbReference>
<dbReference type="InterPro" id="IPR024185">
    <property type="entry name" value="FTHF_cligase-like_sf"/>
</dbReference>
<dbReference type="InterPro" id="IPR009051">
    <property type="entry name" value="Helical_ferredxn"/>
</dbReference>
<dbReference type="InterPro" id="IPR003741">
    <property type="entry name" value="LUD_dom"/>
</dbReference>
<dbReference type="InterPro" id="IPR022825">
    <property type="entry name" value="LutB"/>
</dbReference>
<dbReference type="InterPro" id="IPR004452">
    <property type="entry name" value="LutB/LldF"/>
</dbReference>
<dbReference type="InterPro" id="IPR024569">
    <property type="entry name" value="LutB_C"/>
</dbReference>
<dbReference type="InterPro" id="IPR037171">
    <property type="entry name" value="NagB/RpiA_transferase-like"/>
</dbReference>
<dbReference type="NCBIfam" id="TIGR00273">
    <property type="entry name" value="LutB/LldF family L-lactate oxidation iron-sulfur protein"/>
    <property type="match status" value="1"/>
</dbReference>
<dbReference type="PANTHER" id="PTHR47153">
    <property type="entry name" value="LACTATE UTILIZATION PROTEIN B"/>
    <property type="match status" value="1"/>
</dbReference>
<dbReference type="PANTHER" id="PTHR47153:SF2">
    <property type="entry name" value="LACTATE UTILIZATION PROTEIN B"/>
    <property type="match status" value="1"/>
</dbReference>
<dbReference type="Pfam" id="PF13183">
    <property type="entry name" value="Fer4_8"/>
    <property type="match status" value="1"/>
</dbReference>
<dbReference type="Pfam" id="PF02589">
    <property type="entry name" value="LUD_dom"/>
    <property type="match status" value="1"/>
</dbReference>
<dbReference type="Pfam" id="PF11870">
    <property type="entry name" value="LutB_C"/>
    <property type="match status" value="1"/>
</dbReference>
<dbReference type="SUPFAM" id="SSF46548">
    <property type="entry name" value="alpha-helical ferredoxin"/>
    <property type="match status" value="1"/>
</dbReference>
<dbReference type="SUPFAM" id="SSF100950">
    <property type="entry name" value="NagB/RpiA/CoA transferase-like"/>
    <property type="match status" value="1"/>
</dbReference>
<dbReference type="PROSITE" id="PS00198">
    <property type="entry name" value="4FE4S_FER_1"/>
    <property type="match status" value="1"/>
</dbReference>
<sequence>MSMKISEKKFNDRVGDGIQDSFMRGAVSSAQTRLYTNRLKAADELGNWEEWRELGEQIRQHTLENLDYYLMQLSENVSKRGGHVYFAKTKEEAAKYIQDVAKKKQAKKVVKSKSMVTEEISMNHALEEIGCEVLESDLGEYILQVDNDPPSHIIAPALHKNRTQIRDVFKEKLGYENSDDPYEMTKFVRKQLREKFMDAEIGVTGCNFAVANTGSLCLVTNEGNADLVMSIPKTQIAVMGMERMVPTMEELDVLVGLLCRSAVGQKLTSYVTVAGPIQEEEVDGPEEFHLVVVDNGRSQILGSEFRSVLQCIRCAACVNVCPVYRHVGGHSYGSIYSGPIGAVLTPLLGGYDDYKELPYASSLCGACTEACPVKIPLHDLLLKHRQVIVEQEGRAPLAEKLAMKMFSMGASSAALYKMGSKMAPAAMSPFTSGNRVSKGVGPLKNWTDIREFPAPSKERFRDWYKDHKKGGDK</sequence>
<protein>
    <recommendedName>
        <fullName evidence="1">Lactate utilization protein B</fullName>
    </recommendedName>
</protein>
<evidence type="ECO:0000255" key="1">
    <source>
        <dbReference type="HAMAP-Rule" id="MF_02103"/>
    </source>
</evidence>
<keyword id="KW-0004">4Fe-4S</keyword>
<keyword id="KW-0249">Electron transport</keyword>
<keyword id="KW-0408">Iron</keyword>
<keyword id="KW-0411">Iron-sulfur</keyword>
<keyword id="KW-0479">Metal-binding</keyword>
<keyword id="KW-0677">Repeat</keyword>
<keyword id="KW-0813">Transport</keyword>
<name>LUTB_BACC4</name>
<gene>
    <name evidence="1" type="primary">lutB</name>
    <name type="ordered locus">BCB4264_A1355</name>
</gene>